<sequence length="212" mass="22811">MGPGLRPLLPLVLCVGLSALVPSAGASGFRKRGPSVTAKVFFDVRIGDKDVGRIVIGLFGKVVPKTVENFVALATGEKGYGYKGSKFHRVIKDFMIQGGDFTRGDGTGGISIYGETFPDENFKLKHYGIGWVSMANAGPDTNGSQFFITLTKPTWLDGKHVVFGKVLDGMTVVHSIELQATDGHDRPFTDCSIVNSGKIDVKTPFVVEVSDW</sequence>
<comment type="function">
    <text evidence="2">PPIase that catalyzes the cis-trans isomerization of proline imidic peptide bonds in oligopeptides and may therefore assist protein folding.</text>
</comment>
<comment type="catalytic activity">
    <reaction evidence="2">
        <text>[protein]-peptidylproline (omega=180) = [protein]-peptidylproline (omega=0)</text>
        <dbReference type="Rhea" id="RHEA:16237"/>
        <dbReference type="Rhea" id="RHEA-COMP:10747"/>
        <dbReference type="Rhea" id="RHEA-COMP:10748"/>
        <dbReference type="ChEBI" id="CHEBI:83833"/>
        <dbReference type="ChEBI" id="CHEBI:83834"/>
        <dbReference type="EC" id="5.2.1.8"/>
    </reaction>
</comment>
<comment type="activity regulation">
    <text evidence="2">Inhibited by cyclosporin A (CsA).</text>
</comment>
<comment type="subcellular location">
    <subcellularLocation>
        <location evidence="1">Cytoplasm</location>
    </subcellularLocation>
</comment>
<comment type="similarity">
    <text evidence="4">Belongs to the cyclophilin-type PPIase family.</text>
</comment>
<protein>
    <recommendedName>
        <fullName evidence="4">Peptidyl-prolyl cis-trans isomerase C</fullName>
        <shortName evidence="4">PPIase C</shortName>
        <ecNumber evidence="2">5.2.1.8</ecNumber>
    </recommendedName>
    <alternativeName>
        <fullName>Cyclophilin C</fullName>
    </alternativeName>
    <alternativeName>
        <fullName>Rotamase C</fullName>
    </alternativeName>
</protein>
<dbReference type="EC" id="5.2.1.8" evidence="2"/>
<dbReference type="EMBL" id="BC123474">
    <property type="protein sequence ID" value="AAI23475.1"/>
    <property type="molecule type" value="mRNA"/>
</dbReference>
<dbReference type="RefSeq" id="NP_001070378.1">
    <property type="nucleotide sequence ID" value="NM_001076910.1"/>
</dbReference>
<dbReference type="SMR" id="Q08E11"/>
<dbReference type="FunCoup" id="Q08E11">
    <property type="interactions" value="1051"/>
</dbReference>
<dbReference type="STRING" id="9913.ENSBTAP00000002051"/>
<dbReference type="PaxDb" id="9913-ENSBTAP00000002051"/>
<dbReference type="PeptideAtlas" id="Q08E11"/>
<dbReference type="Ensembl" id="ENSBTAT00000002051.5">
    <property type="protein sequence ID" value="ENSBTAP00000002051.4"/>
    <property type="gene ID" value="ENSBTAG00000001568.6"/>
</dbReference>
<dbReference type="GeneID" id="535494"/>
<dbReference type="KEGG" id="bta:535494"/>
<dbReference type="CTD" id="5480"/>
<dbReference type="VEuPathDB" id="HostDB:ENSBTAG00000001568"/>
<dbReference type="VGNC" id="VGNC:33196">
    <property type="gene designation" value="PPIC"/>
</dbReference>
<dbReference type="eggNOG" id="KOG0880">
    <property type="taxonomic scope" value="Eukaryota"/>
</dbReference>
<dbReference type="GeneTree" id="ENSGT00940000159786"/>
<dbReference type="HOGENOM" id="CLU_012062_4_2_1"/>
<dbReference type="InParanoid" id="Q08E11"/>
<dbReference type="OMA" id="CSIINSG"/>
<dbReference type="OrthoDB" id="193499at2759"/>
<dbReference type="TreeFam" id="TF354259"/>
<dbReference type="Proteomes" id="UP000009136">
    <property type="component" value="Chromosome 7"/>
</dbReference>
<dbReference type="Bgee" id="ENSBTAG00000001568">
    <property type="expression patterns" value="Expressed in uterine cervix and 104 other cell types or tissues"/>
</dbReference>
<dbReference type="GO" id="GO:0005737">
    <property type="term" value="C:cytoplasm"/>
    <property type="evidence" value="ECO:0000318"/>
    <property type="project" value="GO_Central"/>
</dbReference>
<dbReference type="GO" id="GO:0043231">
    <property type="term" value="C:intracellular membrane-bounded organelle"/>
    <property type="evidence" value="ECO:0000318"/>
    <property type="project" value="GO_Central"/>
</dbReference>
<dbReference type="GO" id="GO:0016018">
    <property type="term" value="F:cyclosporin A binding"/>
    <property type="evidence" value="ECO:0000318"/>
    <property type="project" value="GO_Central"/>
</dbReference>
<dbReference type="GO" id="GO:0003755">
    <property type="term" value="F:peptidyl-prolyl cis-trans isomerase activity"/>
    <property type="evidence" value="ECO:0000250"/>
    <property type="project" value="UniProtKB"/>
</dbReference>
<dbReference type="GO" id="GO:0006457">
    <property type="term" value="P:protein folding"/>
    <property type="evidence" value="ECO:0000318"/>
    <property type="project" value="GO_Central"/>
</dbReference>
<dbReference type="CDD" id="cd01926">
    <property type="entry name" value="cyclophilin_ABH_like"/>
    <property type="match status" value="1"/>
</dbReference>
<dbReference type="FunFam" id="2.40.100.10:FF:000001">
    <property type="entry name" value="Peptidyl-prolyl cis-trans isomerase"/>
    <property type="match status" value="1"/>
</dbReference>
<dbReference type="Gene3D" id="2.40.100.10">
    <property type="entry name" value="Cyclophilin-like"/>
    <property type="match status" value="1"/>
</dbReference>
<dbReference type="InterPro" id="IPR029000">
    <property type="entry name" value="Cyclophilin-like_dom_sf"/>
</dbReference>
<dbReference type="InterPro" id="IPR020892">
    <property type="entry name" value="Cyclophilin-type_PPIase_CS"/>
</dbReference>
<dbReference type="InterPro" id="IPR002130">
    <property type="entry name" value="Cyclophilin-type_PPIase_dom"/>
</dbReference>
<dbReference type="PANTHER" id="PTHR11071">
    <property type="entry name" value="PEPTIDYL-PROLYL CIS-TRANS ISOMERASE"/>
    <property type="match status" value="1"/>
</dbReference>
<dbReference type="PANTHER" id="PTHR11071:SF11">
    <property type="entry name" value="PEPTIDYL-PROLYL CIS-TRANS ISOMERASE C"/>
    <property type="match status" value="1"/>
</dbReference>
<dbReference type="Pfam" id="PF00160">
    <property type="entry name" value="Pro_isomerase"/>
    <property type="match status" value="1"/>
</dbReference>
<dbReference type="PRINTS" id="PR00153">
    <property type="entry name" value="CSAPPISMRASE"/>
</dbReference>
<dbReference type="SUPFAM" id="SSF50891">
    <property type="entry name" value="Cyclophilin-like"/>
    <property type="match status" value="1"/>
</dbReference>
<dbReference type="PROSITE" id="PS00170">
    <property type="entry name" value="CSA_PPIASE_1"/>
    <property type="match status" value="1"/>
</dbReference>
<dbReference type="PROSITE" id="PS50072">
    <property type="entry name" value="CSA_PPIASE_2"/>
    <property type="match status" value="1"/>
</dbReference>
<name>PPIC_BOVIN</name>
<keyword id="KW-0963">Cytoplasm</keyword>
<keyword id="KW-0413">Isomerase</keyword>
<keyword id="KW-1185">Reference proteome</keyword>
<keyword id="KW-0697">Rotamase</keyword>
<feature type="chain" id="PRO_0000282592" description="Peptidyl-prolyl cis-trans isomerase C">
    <location>
        <begin position="1"/>
        <end position="212"/>
    </location>
</feature>
<feature type="domain" description="PPIase cyclophilin-type" evidence="3">
    <location>
        <begin position="41"/>
        <end position="198"/>
    </location>
</feature>
<evidence type="ECO:0000250" key="1">
    <source>
        <dbReference type="UniProtKB" id="P30412"/>
    </source>
</evidence>
<evidence type="ECO:0000250" key="2">
    <source>
        <dbReference type="UniProtKB" id="P45877"/>
    </source>
</evidence>
<evidence type="ECO:0000255" key="3">
    <source>
        <dbReference type="PROSITE-ProRule" id="PRU00156"/>
    </source>
</evidence>
<evidence type="ECO:0000305" key="4"/>
<organism>
    <name type="scientific">Bos taurus</name>
    <name type="common">Bovine</name>
    <dbReference type="NCBI Taxonomy" id="9913"/>
    <lineage>
        <taxon>Eukaryota</taxon>
        <taxon>Metazoa</taxon>
        <taxon>Chordata</taxon>
        <taxon>Craniata</taxon>
        <taxon>Vertebrata</taxon>
        <taxon>Euteleostomi</taxon>
        <taxon>Mammalia</taxon>
        <taxon>Eutheria</taxon>
        <taxon>Laurasiatheria</taxon>
        <taxon>Artiodactyla</taxon>
        <taxon>Ruminantia</taxon>
        <taxon>Pecora</taxon>
        <taxon>Bovidae</taxon>
        <taxon>Bovinae</taxon>
        <taxon>Bos</taxon>
    </lineage>
</organism>
<proteinExistence type="evidence at transcript level"/>
<reference key="1">
    <citation type="submission" date="2006-09" db="EMBL/GenBank/DDBJ databases">
        <authorList>
            <consortium name="NIH - Mammalian Gene Collection (MGC) project"/>
        </authorList>
    </citation>
    <scope>NUCLEOTIDE SEQUENCE [LARGE SCALE MRNA]</scope>
    <source>
        <strain>Hereford</strain>
        <tissue>Fetal muscle</tissue>
    </source>
</reference>
<gene>
    <name evidence="2" type="primary">PPIC</name>
</gene>
<accession>Q08E11</accession>